<reference key="1">
    <citation type="journal article" date="2005" name="Nucleic Acids Res.">
        <title>The genome sequence of Salmonella enterica serovar Choleraesuis, a highly invasive and resistant zoonotic pathogen.</title>
        <authorList>
            <person name="Chiu C.-H."/>
            <person name="Tang P."/>
            <person name="Chu C."/>
            <person name="Hu S."/>
            <person name="Bao Q."/>
            <person name="Yu J."/>
            <person name="Chou Y.-Y."/>
            <person name="Wang H.-S."/>
            <person name="Lee Y.-S."/>
        </authorList>
    </citation>
    <scope>NUCLEOTIDE SEQUENCE [LARGE SCALE GENOMIC DNA]</scope>
    <source>
        <strain>SC-B67</strain>
    </source>
</reference>
<gene>
    <name evidence="1" type="primary">kdsB</name>
    <name type="ordered locus">SCH_0945</name>
</gene>
<comment type="function">
    <text evidence="1">Activates KDO (a required 8-carbon sugar) for incorporation into bacterial lipopolysaccharide in Gram-negative bacteria.</text>
</comment>
<comment type="catalytic activity">
    <reaction evidence="1">
        <text>3-deoxy-alpha-D-manno-oct-2-ulosonate + CTP = CMP-3-deoxy-beta-D-manno-octulosonate + diphosphate</text>
        <dbReference type="Rhea" id="RHEA:23448"/>
        <dbReference type="ChEBI" id="CHEBI:33019"/>
        <dbReference type="ChEBI" id="CHEBI:37563"/>
        <dbReference type="ChEBI" id="CHEBI:85986"/>
        <dbReference type="ChEBI" id="CHEBI:85987"/>
        <dbReference type="EC" id="2.7.7.38"/>
    </reaction>
</comment>
<comment type="pathway">
    <text evidence="1">Nucleotide-sugar biosynthesis; CMP-3-deoxy-D-manno-octulosonate biosynthesis; CMP-3-deoxy-D-manno-octulosonate from 3-deoxy-D-manno-octulosonate and CTP: step 1/1.</text>
</comment>
<comment type="pathway">
    <text evidence="1">Bacterial outer membrane biogenesis; lipopolysaccharide biosynthesis.</text>
</comment>
<comment type="subcellular location">
    <subcellularLocation>
        <location evidence="1">Cytoplasm</location>
    </subcellularLocation>
</comment>
<comment type="similarity">
    <text evidence="1">Belongs to the KdsB family.</text>
</comment>
<keyword id="KW-0963">Cytoplasm</keyword>
<keyword id="KW-0448">Lipopolysaccharide biosynthesis</keyword>
<keyword id="KW-0548">Nucleotidyltransferase</keyword>
<keyword id="KW-0808">Transferase</keyword>
<accession>Q57R10</accession>
<sequence>MSFVVIIPARFSSTRLPGKPLVDINGKPMIVHVLERARESGAERIIVATDHEDVARAVEAAGGEVCMTRADHQSGTERLAEVVEKCGFSDDTVIVNVQGDEPMIPAVIIRQVAENLAQRQVGMATLAVPIHSAEEAFNPNAVKVVLDAEGYALYFSRATIPWDRDRFAKSLETVGDTCLRHLGIYGYRAGFIRRYVSWQPSPLEHIEMLEQLRVLWYGEKIHVAVAKAVPGTGVDTADDLERVRAEMR</sequence>
<evidence type="ECO:0000255" key="1">
    <source>
        <dbReference type="HAMAP-Rule" id="MF_00057"/>
    </source>
</evidence>
<dbReference type="EC" id="2.7.7.38" evidence="1"/>
<dbReference type="EMBL" id="AE017220">
    <property type="protein sequence ID" value="AAX64851.1"/>
    <property type="molecule type" value="Genomic_DNA"/>
</dbReference>
<dbReference type="RefSeq" id="WP_000011576.1">
    <property type="nucleotide sequence ID" value="NC_006905.1"/>
</dbReference>
<dbReference type="SMR" id="Q57R10"/>
<dbReference type="KEGG" id="sec:SCH_0945"/>
<dbReference type="HOGENOM" id="CLU_065038_1_0_6"/>
<dbReference type="UniPathway" id="UPA00030"/>
<dbReference type="UniPathway" id="UPA00358">
    <property type="reaction ID" value="UER00476"/>
</dbReference>
<dbReference type="Proteomes" id="UP000000538">
    <property type="component" value="Chromosome"/>
</dbReference>
<dbReference type="GO" id="GO:0005829">
    <property type="term" value="C:cytosol"/>
    <property type="evidence" value="ECO:0007669"/>
    <property type="project" value="TreeGrafter"/>
</dbReference>
<dbReference type="GO" id="GO:0008690">
    <property type="term" value="F:3-deoxy-manno-octulosonate cytidylyltransferase activity"/>
    <property type="evidence" value="ECO:0007669"/>
    <property type="project" value="UniProtKB-UniRule"/>
</dbReference>
<dbReference type="GO" id="GO:0033468">
    <property type="term" value="P:CMP-keto-3-deoxy-D-manno-octulosonic acid biosynthetic process"/>
    <property type="evidence" value="ECO:0007669"/>
    <property type="project" value="UniProtKB-UniRule"/>
</dbReference>
<dbReference type="GO" id="GO:0009103">
    <property type="term" value="P:lipopolysaccharide biosynthetic process"/>
    <property type="evidence" value="ECO:0007669"/>
    <property type="project" value="UniProtKB-UniRule"/>
</dbReference>
<dbReference type="CDD" id="cd02517">
    <property type="entry name" value="CMP-KDO-Synthetase"/>
    <property type="match status" value="1"/>
</dbReference>
<dbReference type="FunFam" id="3.90.550.10:FF:000011">
    <property type="entry name" value="3-deoxy-manno-octulosonate cytidylyltransferase"/>
    <property type="match status" value="1"/>
</dbReference>
<dbReference type="Gene3D" id="3.90.550.10">
    <property type="entry name" value="Spore Coat Polysaccharide Biosynthesis Protein SpsA, Chain A"/>
    <property type="match status" value="1"/>
</dbReference>
<dbReference type="HAMAP" id="MF_00057">
    <property type="entry name" value="KdsB"/>
    <property type="match status" value="1"/>
</dbReference>
<dbReference type="InterPro" id="IPR003329">
    <property type="entry name" value="Cytidylyl_trans"/>
</dbReference>
<dbReference type="InterPro" id="IPR004528">
    <property type="entry name" value="KdsB"/>
</dbReference>
<dbReference type="InterPro" id="IPR029044">
    <property type="entry name" value="Nucleotide-diphossugar_trans"/>
</dbReference>
<dbReference type="NCBIfam" id="TIGR00466">
    <property type="entry name" value="kdsB"/>
    <property type="match status" value="1"/>
</dbReference>
<dbReference type="NCBIfam" id="NF003950">
    <property type="entry name" value="PRK05450.1-3"/>
    <property type="match status" value="1"/>
</dbReference>
<dbReference type="NCBIfam" id="NF003952">
    <property type="entry name" value="PRK05450.1-5"/>
    <property type="match status" value="1"/>
</dbReference>
<dbReference type="NCBIfam" id="NF009905">
    <property type="entry name" value="PRK13368.1"/>
    <property type="match status" value="1"/>
</dbReference>
<dbReference type="PANTHER" id="PTHR42866">
    <property type="entry name" value="3-DEOXY-MANNO-OCTULOSONATE CYTIDYLYLTRANSFERASE"/>
    <property type="match status" value="1"/>
</dbReference>
<dbReference type="PANTHER" id="PTHR42866:SF2">
    <property type="entry name" value="3-DEOXY-MANNO-OCTULOSONATE CYTIDYLYLTRANSFERASE, MITOCHONDRIAL"/>
    <property type="match status" value="1"/>
</dbReference>
<dbReference type="Pfam" id="PF02348">
    <property type="entry name" value="CTP_transf_3"/>
    <property type="match status" value="1"/>
</dbReference>
<dbReference type="SUPFAM" id="SSF53448">
    <property type="entry name" value="Nucleotide-diphospho-sugar transferases"/>
    <property type="match status" value="1"/>
</dbReference>
<organism>
    <name type="scientific">Salmonella choleraesuis (strain SC-B67)</name>
    <dbReference type="NCBI Taxonomy" id="321314"/>
    <lineage>
        <taxon>Bacteria</taxon>
        <taxon>Pseudomonadati</taxon>
        <taxon>Pseudomonadota</taxon>
        <taxon>Gammaproteobacteria</taxon>
        <taxon>Enterobacterales</taxon>
        <taxon>Enterobacteriaceae</taxon>
        <taxon>Salmonella</taxon>
    </lineage>
</organism>
<feature type="chain" id="PRO_1000003379" description="3-deoxy-manno-octulosonate cytidylyltransferase">
    <location>
        <begin position="1"/>
        <end position="248"/>
    </location>
</feature>
<protein>
    <recommendedName>
        <fullName evidence="1">3-deoxy-manno-octulosonate cytidylyltransferase</fullName>
        <ecNumber evidence="1">2.7.7.38</ecNumber>
    </recommendedName>
    <alternativeName>
        <fullName evidence="1">CMP-2-keto-3-deoxyoctulosonic acid synthase</fullName>
        <shortName evidence="1">CKS</shortName>
        <shortName evidence="1">CMP-KDO synthase</shortName>
    </alternativeName>
</protein>
<proteinExistence type="inferred from homology"/>
<name>KDSB_SALCH</name>